<sequence>MANDQNKDYDKIIVLDYGSQYNQLITRRIREFGIYSELKPHTITAAEVKKIAPKGIIFSGGPNSVYDEGALGVDEDIFKLGIPILGVCYGMQLMAQRLGGDVEPADNREYGKADIEVTDASAKLFHDLPKDQTVWMSHGDLVTRVPDGFRTTATSVNCPISAMDDDDRKFYGIQFHAEVQNTQYGHEILHHFAFDVCHAEANWSMDDFITKQIAKIRAEVGDKRVLLGLSGGVDSSVVGVLLHKAIGTQLTSIFVDHGLLRKGEAEQVMDSLKGKFGLNIIKVNAKDRFLNDLRGVTDPEKKRKIIGRDFIEVFNEEAAKLNGIEFLAQGTLYTDVVESGTDTAQTIKSHHNVGGLPEDLKFKLIEPLNKLFKDEVRELGEKLGMPHSLVWRQPFPGPGLGIRVIGEVTEDKLEIVRDSDYILREEIAKHGLDKDIWQYFTVLPGIRSVGVMGDGRTYDYTIGIRAITSIDGMTADFARIDWDVLQEISSRIVNEVKHVNRVVYDITSKPPATIEWE</sequence>
<proteinExistence type="inferred from homology"/>
<protein>
    <recommendedName>
        <fullName>GMP synthase [glutamine-hydrolyzing]</fullName>
        <ecNumber>6.3.5.2</ecNumber>
    </recommendedName>
    <alternativeName>
        <fullName>GMP synthetase</fullName>
    </alternativeName>
    <alternativeName>
        <fullName>Glutamine amidotransferase</fullName>
    </alternativeName>
</protein>
<keyword id="KW-0067">ATP-binding</keyword>
<keyword id="KW-0315">Glutamine amidotransferase</keyword>
<keyword id="KW-0332">GMP biosynthesis</keyword>
<keyword id="KW-0436">Ligase</keyword>
<keyword id="KW-0547">Nucleotide-binding</keyword>
<keyword id="KW-0658">Purine biosynthesis</keyword>
<comment type="function">
    <text evidence="1">Catalyzes the synthesis of GMP from XMP.</text>
</comment>
<comment type="catalytic activity">
    <reaction>
        <text>XMP + L-glutamine + ATP + H2O = GMP + L-glutamate + AMP + diphosphate + 2 H(+)</text>
        <dbReference type="Rhea" id="RHEA:11680"/>
        <dbReference type="ChEBI" id="CHEBI:15377"/>
        <dbReference type="ChEBI" id="CHEBI:15378"/>
        <dbReference type="ChEBI" id="CHEBI:29985"/>
        <dbReference type="ChEBI" id="CHEBI:30616"/>
        <dbReference type="ChEBI" id="CHEBI:33019"/>
        <dbReference type="ChEBI" id="CHEBI:57464"/>
        <dbReference type="ChEBI" id="CHEBI:58115"/>
        <dbReference type="ChEBI" id="CHEBI:58359"/>
        <dbReference type="ChEBI" id="CHEBI:456215"/>
        <dbReference type="EC" id="6.3.5.2"/>
    </reaction>
</comment>
<comment type="pathway">
    <text>Purine metabolism; GMP biosynthesis; GMP from XMP (L-Gln route): step 1/1.</text>
</comment>
<comment type="subunit">
    <text evidence="1">Homodimer.</text>
</comment>
<evidence type="ECO:0000250" key="1"/>
<feature type="chain" id="PRO_0000140139" description="GMP synthase [glutamine-hydrolyzing]">
    <location>
        <begin position="1"/>
        <end position="517"/>
    </location>
</feature>
<feature type="domain" description="Glutamine amidotransferase type-1">
    <location>
        <begin position="11"/>
        <end position="202"/>
    </location>
</feature>
<feature type="domain" description="GMPS ATP-PPase">
    <location>
        <begin position="203"/>
        <end position="392"/>
    </location>
</feature>
<feature type="active site" description="Nucleophile" evidence="1">
    <location>
        <position position="88"/>
    </location>
</feature>
<feature type="active site" evidence="1">
    <location>
        <position position="176"/>
    </location>
</feature>
<feature type="active site" evidence="1">
    <location>
        <position position="178"/>
    </location>
</feature>
<feature type="binding site" evidence="1">
    <location>
        <begin position="230"/>
        <end position="236"/>
    </location>
    <ligand>
        <name>ATP</name>
        <dbReference type="ChEBI" id="CHEBI:30616"/>
    </ligand>
</feature>
<name>GUAA_LACRH</name>
<dbReference type="EC" id="6.3.5.2"/>
<dbReference type="EMBL" id="AF051937">
    <property type="protein sequence ID" value="AAC33274.1"/>
    <property type="molecule type" value="Genomic_DNA"/>
</dbReference>
<dbReference type="RefSeq" id="WP_005712824.1">
    <property type="nucleotide sequence ID" value="NZ_RINK01000020.1"/>
</dbReference>
<dbReference type="SMR" id="O85192"/>
<dbReference type="STRING" id="47715.AWJ15_05305"/>
<dbReference type="MEROPS" id="C26.957"/>
<dbReference type="eggNOG" id="COG0519">
    <property type="taxonomic scope" value="Bacteria"/>
</dbReference>
<dbReference type="BRENDA" id="6.3.5.2">
    <property type="organism ID" value="2891"/>
</dbReference>
<dbReference type="UniPathway" id="UPA00189">
    <property type="reaction ID" value="UER00296"/>
</dbReference>
<dbReference type="GO" id="GO:0005829">
    <property type="term" value="C:cytosol"/>
    <property type="evidence" value="ECO:0007669"/>
    <property type="project" value="TreeGrafter"/>
</dbReference>
<dbReference type="GO" id="GO:0005524">
    <property type="term" value="F:ATP binding"/>
    <property type="evidence" value="ECO:0007669"/>
    <property type="project" value="UniProtKB-UniRule"/>
</dbReference>
<dbReference type="GO" id="GO:0003921">
    <property type="term" value="F:GMP synthase activity"/>
    <property type="evidence" value="ECO:0007669"/>
    <property type="project" value="InterPro"/>
</dbReference>
<dbReference type="CDD" id="cd01742">
    <property type="entry name" value="GATase1_GMP_Synthase"/>
    <property type="match status" value="1"/>
</dbReference>
<dbReference type="CDD" id="cd01997">
    <property type="entry name" value="GMP_synthase_C"/>
    <property type="match status" value="1"/>
</dbReference>
<dbReference type="FunFam" id="3.30.300.10:FF:000002">
    <property type="entry name" value="GMP synthase [glutamine-hydrolyzing]"/>
    <property type="match status" value="1"/>
</dbReference>
<dbReference type="FunFam" id="3.40.50.620:FF:000001">
    <property type="entry name" value="GMP synthase [glutamine-hydrolyzing]"/>
    <property type="match status" value="1"/>
</dbReference>
<dbReference type="FunFam" id="3.40.50.880:FF:000001">
    <property type="entry name" value="GMP synthase [glutamine-hydrolyzing]"/>
    <property type="match status" value="1"/>
</dbReference>
<dbReference type="Gene3D" id="3.30.300.10">
    <property type="match status" value="1"/>
</dbReference>
<dbReference type="Gene3D" id="3.40.50.880">
    <property type="match status" value="1"/>
</dbReference>
<dbReference type="Gene3D" id="3.40.50.620">
    <property type="entry name" value="HUPs"/>
    <property type="match status" value="1"/>
</dbReference>
<dbReference type="HAMAP" id="MF_00344">
    <property type="entry name" value="GMP_synthase"/>
    <property type="match status" value="1"/>
</dbReference>
<dbReference type="InterPro" id="IPR029062">
    <property type="entry name" value="Class_I_gatase-like"/>
</dbReference>
<dbReference type="InterPro" id="IPR017926">
    <property type="entry name" value="GATASE"/>
</dbReference>
<dbReference type="InterPro" id="IPR001674">
    <property type="entry name" value="GMP_synth_C"/>
</dbReference>
<dbReference type="InterPro" id="IPR004739">
    <property type="entry name" value="GMP_synth_GATase"/>
</dbReference>
<dbReference type="InterPro" id="IPR022955">
    <property type="entry name" value="GMP_synthase"/>
</dbReference>
<dbReference type="InterPro" id="IPR025777">
    <property type="entry name" value="GMPS_ATP_PPase_dom"/>
</dbReference>
<dbReference type="InterPro" id="IPR022310">
    <property type="entry name" value="NAD/GMP_synthase"/>
</dbReference>
<dbReference type="InterPro" id="IPR014729">
    <property type="entry name" value="Rossmann-like_a/b/a_fold"/>
</dbReference>
<dbReference type="NCBIfam" id="TIGR00884">
    <property type="entry name" value="guaA_Cterm"/>
    <property type="match status" value="1"/>
</dbReference>
<dbReference type="NCBIfam" id="TIGR00888">
    <property type="entry name" value="guaA_Nterm"/>
    <property type="match status" value="1"/>
</dbReference>
<dbReference type="NCBIfam" id="NF000848">
    <property type="entry name" value="PRK00074.1"/>
    <property type="match status" value="1"/>
</dbReference>
<dbReference type="PANTHER" id="PTHR11922:SF2">
    <property type="entry name" value="GMP SYNTHASE [GLUTAMINE-HYDROLYZING]"/>
    <property type="match status" value="1"/>
</dbReference>
<dbReference type="PANTHER" id="PTHR11922">
    <property type="entry name" value="GMP SYNTHASE-RELATED"/>
    <property type="match status" value="1"/>
</dbReference>
<dbReference type="Pfam" id="PF00117">
    <property type="entry name" value="GATase"/>
    <property type="match status" value="1"/>
</dbReference>
<dbReference type="Pfam" id="PF00958">
    <property type="entry name" value="GMP_synt_C"/>
    <property type="match status" value="1"/>
</dbReference>
<dbReference type="Pfam" id="PF02540">
    <property type="entry name" value="NAD_synthase"/>
    <property type="match status" value="1"/>
</dbReference>
<dbReference type="PRINTS" id="PR00099">
    <property type="entry name" value="CPSGATASE"/>
</dbReference>
<dbReference type="PRINTS" id="PR00096">
    <property type="entry name" value="GATASE"/>
</dbReference>
<dbReference type="SUPFAM" id="SSF52402">
    <property type="entry name" value="Adenine nucleotide alpha hydrolases-like"/>
    <property type="match status" value="1"/>
</dbReference>
<dbReference type="SUPFAM" id="SSF52317">
    <property type="entry name" value="Class I glutamine amidotransferase-like"/>
    <property type="match status" value="1"/>
</dbReference>
<dbReference type="PROSITE" id="PS51273">
    <property type="entry name" value="GATASE_TYPE_1"/>
    <property type="match status" value="1"/>
</dbReference>
<dbReference type="PROSITE" id="PS51553">
    <property type="entry name" value="GMPS_ATP_PPASE"/>
    <property type="match status" value="1"/>
</dbReference>
<organism>
    <name type="scientific">Lacticaseibacillus rhamnosus</name>
    <name type="common">Lactobacillus rhamnosus</name>
    <dbReference type="NCBI Taxonomy" id="47715"/>
    <lineage>
        <taxon>Bacteria</taxon>
        <taxon>Bacillati</taxon>
        <taxon>Bacillota</taxon>
        <taxon>Bacilli</taxon>
        <taxon>Lactobacillales</taxon>
        <taxon>Lactobacillaceae</taxon>
        <taxon>Lacticaseibacillus</taxon>
    </lineage>
</organism>
<gene>
    <name type="primary">guaA</name>
</gene>
<reference key="1">
    <citation type="journal article" date="2000" name="Curr. Microbiol.">
        <title>Genetic organization and polymorphism of the guaA gene encoding the GMP synthetase in Lactobacillus rhamnosus.</title>
        <authorList>
            <person name="Grimaldi C."/>
            <person name="Dutertre M."/>
            <person name="Simonet J.-M."/>
        </authorList>
    </citation>
    <scope>NUCLEOTIDE SEQUENCE [GENOMIC DNA]</scope>
    <source>
        <strain>X202</strain>
    </source>
</reference>
<accession>O85192</accession>